<reference key="1">
    <citation type="journal article" date="2005" name="Nucleic Acids Res.">
        <title>The genome sequence of Salmonella enterica serovar Choleraesuis, a highly invasive and resistant zoonotic pathogen.</title>
        <authorList>
            <person name="Chiu C.-H."/>
            <person name="Tang P."/>
            <person name="Chu C."/>
            <person name="Hu S."/>
            <person name="Bao Q."/>
            <person name="Yu J."/>
            <person name="Chou Y.-Y."/>
            <person name="Wang H.-S."/>
            <person name="Lee Y.-S."/>
        </authorList>
    </citation>
    <scope>NUCLEOTIDE SEQUENCE [LARGE SCALE GENOMIC DNA]</scope>
    <source>
        <strain>SC-B67</strain>
    </source>
</reference>
<gene>
    <name evidence="1" type="primary">rpmG</name>
    <name type="ordered locus">SCH_3650</name>
</gene>
<feature type="chain" id="PRO_1000004190" description="Large ribosomal subunit protein bL33">
    <location>
        <begin position="1"/>
        <end position="55"/>
    </location>
</feature>
<name>RL33_SALCH</name>
<keyword id="KW-0687">Ribonucleoprotein</keyword>
<keyword id="KW-0689">Ribosomal protein</keyword>
<accession>Q57IA6</accession>
<sequence length="55" mass="6372">MAKGIREKIKLVSSAGTGHFYTTTKNKRTKPEKLELKKFDPVVRQHVIYKEAKIK</sequence>
<dbReference type="EMBL" id="AE017220">
    <property type="protein sequence ID" value="AAX67556.1"/>
    <property type="molecule type" value="Genomic_DNA"/>
</dbReference>
<dbReference type="RefSeq" id="WP_001051798.1">
    <property type="nucleotide sequence ID" value="NC_006905.1"/>
</dbReference>
<dbReference type="SMR" id="Q57IA6"/>
<dbReference type="GeneID" id="97607673"/>
<dbReference type="KEGG" id="sec:SCH_3650"/>
<dbReference type="HOGENOM" id="CLU_190949_1_1_6"/>
<dbReference type="Proteomes" id="UP000000538">
    <property type="component" value="Chromosome"/>
</dbReference>
<dbReference type="GO" id="GO:0022625">
    <property type="term" value="C:cytosolic large ribosomal subunit"/>
    <property type="evidence" value="ECO:0007669"/>
    <property type="project" value="TreeGrafter"/>
</dbReference>
<dbReference type="GO" id="GO:0003735">
    <property type="term" value="F:structural constituent of ribosome"/>
    <property type="evidence" value="ECO:0007669"/>
    <property type="project" value="InterPro"/>
</dbReference>
<dbReference type="GO" id="GO:0006412">
    <property type="term" value="P:translation"/>
    <property type="evidence" value="ECO:0007669"/>
    <property type="project" value="UniProtKB-UniRule"/>
</dbReference>
<dbReference type="FunFam" id="2.20.28.120:FF:000001">
    <property type="entry name" value="50S ribosomal protein L33"/>
    <property type="match status" value="1"/>
</dbReference>
<dbReference type="Gene3D" id="2.20.28.120">
    <property type="entry name" value="Ribosomal protein L33"/>
    <property type="match status" value="1"/>
</dbReference>
<dbReference type="HAMAP" id="MF_00294">
    <property type="entry name" value="Ribosomal_bL33"/>
    <property type="match status" value="1"/>
</dbReference>
<dbReference type="InterPro" id="IPR001705">
    <property type="entry name" value="Ribosomal_bL33"/>
</dbReference>
<dbReference type="InterPro" id="IPR018264">
    <property type="entry name" value="Ribosomal_bL33_CS"/>
</dbReference>
<dbReference type="InterPro" id="IPR038584">
    <property type="entry name" value="Ribosomal_bL33_sf"/>
</dbReference>
<dbReference type="InterPro" id="IPR011332">
    <property type="entry name" value="Ribosomal_zn-bd"/>
</dbReference>
<dbReference type="NCBIfam" id="NF001860">
    <property type="entry name" value="PRK00595.1"/>
    <property type="match status" value="1"/>
</dbReference>
<dbReference type="NCBIfam" id="TIGR01023">
    <property type="entry name" value="rpmG_bact"/>
    <property type="match status" value="1"/>
</dbReference>
<dbReference type="PANTHER" id="PTHR15238">
    <property type="entry name" value="54S RIBOSOMAL PROTEIN L39, MITOCHONDRIAL"/>
    <property type="match status" value="1"/>
</dbReference>
<dbReference type="PANTHER" id="PTHR15238:SF1">
    <property type="entry name" value="LARGE RIBOSOMAL SUBUNIT PROTEIN BL33M"/>
    <property type="match status" value="1"/>
</dbReference>
<dbReference type="Pfam" id="PF00471">
    <property type="entry name" value="Ribosomal_L33"/>
    <property type="match status" value="1"/>
</dbReference>
<dbReference type="SUPFAM" id="SSF57829">
    <property type="entry name" value="Zn-binding ribosomal proteins"/>
    <property type="match status" value="1"/>
</dbReference>
<dbReference type="PROSITE" id="PS00582">
    <property type="entry name" value="RIBOSOMAL_L33"/>
    <property type="match status" value="1"/>
</dbReference>
<proteinExistence type="inferred from homology"/>
<organism>
    <name type="scientific">Salmonella choleraesuis (strain SC-B67)</name>
    <dbReference type="NCBI Taxonomy" id="321314"/>
    <lineage>
        <taxon>Bacteria</taxon>
        <taxon>Pseudomonadati</taxon>
        <taxon>Pseudomonadota</taxon>
        <taxon>Gammaproteobacteria</taxon>
        <taxon>Enterobacterales</taxon>
        <taxon>Enterobacteriaceae</taxon>
        <taxon>Salmonella</taxon>
    </lineage>
</organism>
<comment type="similarity">
    <text evidence="1">Belongs to the bacterial ribosomal protein bL33 family.</text>
</comment>
<protein>
    <recommendedName>
        <fullName evidence="1">Large ribosomal subunit protein bL33</fullName>
    </recommendedName>
    <alternativeName>
        <fullName evidence="2">50S ribosomal protein L33</fullName>
    </alternativeName>
</protein>
<evidence type="ECO:0000255" key="1">
    <source>
        <dbReference type="HAMAP-Rule" id="MF_00294"/>
    </source>
</evidence>
<evidence type="ECO:0000305" key="2"/>